<gene>
    <name type="ordered locus">cgR_0315</name>
</gene>
<accession>A4QAN2</accession>
<evidence type="ECO:0000255" key="1">
    <source>
        <dbReference type="HAMAP-Rule" id="MF_00274"/>
    </source>
</evidence>
<feature type="chain" id="PRO_1000003734" description="Nucleoid-associated protein cgR_0315">
    <location>
        <begin position="1"/>
        <end position="103"/>
    </location>
</feature>
<organism>
    <name type="scientific">Corynebacterium glutamicum (strain R)</name>
    <dbReference type="NCBI Taxonomy" id="340322"/>
    <lineage>
        <taxon>Bacteria</taxon>
        <taxon>Bacillati</taxon>
        <taxon>Actinomycetota</taxon>
        <taxon>Actinomycetes</taxon>
        <taxon>Mycobacteriales</taxon>
        <taxon>Corynebacteriaceae</taxon>
        <taxon>Corynebacterium</taxon>
    </lineage>
</organism>
<protein>
    <recommendedName>
        <fullName evidence="1">Nucleoid-associated protein cgR_0315</fullName>
    </recommendedName>
</protein>
<comment type="function">
    <text evidence="1">Binds to DNA and alters its conformation. May be involved in regulation of gene expression, nucleoid organization and DNA protection.</text>
</comment>
<comment type="subunit">
    <text evidence="1">Homodimer.</text>
</comment>
<comment type="subcellular location">
    <subcellularLocation>
        <location evidence="1">Cytoplasm</location>
        <location evidence="1">Nucleoid</location>
    </subcellularLocation>
</comment>
<comment type="similarity">
    <text evidence="1">Belongs to the YbaB/EbfC family.</text>
</comment>
<proteinExistence type="inferred from homology"/>
<sequence length="103" mass="10722">MTQPDMSQILAQAQQMQAQLQAAQQEILATTVVGNAGNGLVTVTMAGNGEVSAVTVDPKVVDPEDVETLQDLLLGAFKDAHNKVANVAEEKMGPLSQGMGGLF</sequence>
<dbReference type="EMBL" id="AP009044">
    <property type="protein sequence ID" value="BAF53279.1"/>
    <property type="molecule type" value="Genomic_DNA"/>
</dbReference>
<dbReference type="RefSeq" id="WP_003855676.1">
    <property type="nucleotide sequence ID" value="NC_009342.1"/>
</dbReference>
<dbReference type="SMR" id="A4QAN2"/>
<dbReference type="GeneID" id="1021132"/>
<dbReference type="KEGG" id="cgt:cgR_0315"/>
<dbReference type="HOGENOM" id="CLU_140930_4_0_11"/>
<dbReference type="PhylomeDB" id="A4QAN2"/>
<dbReference type="Proteomes" id="UP000006698">
    <property type="component" value="Chromosome"/>
</dbReference>
<dbReference type="GO" id="GO:0043590">
    <property type="term" value="C:bacterial nucleoid"/>
    <property type="evidence" value="ECO:0007669"/>
    <property type="project" value="UniProtKB-UniRule"/>
</dbReference>
<dbReference type="GO" id="GO:0005829">
    <property type="term" value="C:cytosol"/>
    <property type="evidence" value="ECO:0007669"/>
    <property type="project" value="TreeGrafter"/>
</dbReference>
<dbReference type="GO" id="GO:0003677">
    <property type="term" value="F:DNA binding"/>
    <property type="evidence" value="ECO:0007669"/>
    <property type="project" value="UniProtKB-UniRule"/>
</dbReference>
<dbReference type="Gene3D" id="3.30.1310.10">
    <property type="entry name" value="Nucleoid-associated protein YbaB-like domain"/>
    <property type="match status" value="1"/>
</dbReference>
<dbReference type="HAMAP" id="MF_00274">
    <property type="entry name" value="DNA_YbaB_EbfC"/>
    <property type="match status" value="1"/>
</dbReference>
<dbReference type="InterPro" id="IPR036894">
    <property type="entry name" value="YbaB-like_sf"/>
</dbReference>
<dbReference type="InterPro" id="IPR004401">
    <property type="entry name" value="YbaB/EbfC"/>
</dbReference>
<dbReference type="NCBIfam" id="TIGR00103">
    <property type="entry name" value="DNA_YbaB_EbfC"/>
    <property type="match status" value="1"/>
</dbReference>
<dbReference type="PANTHER" id="PTHR33449">
    <property type="entry name" value="NUCLEOID-ASSOCIATED PROTEIN YBAB"/>
    <property type="match status" value="1"/>
</dbReference>
<dbReference type="PANTHER" id="PTHR33449:SF1">
    <property type="entry name" value="NUCLEOID-ASSOCIATED PROTEIN YBAB"/>
    <property type="match status" value="1"/>
</dbReference>
<dbReference type="Pfam" id="PF02575">
    <property type="entry name" value="YbaB_DNA_bd"/>
    <property type="match status" value="1"/>
</dbReference>
<dbReference type="PIRSF" id="PIRSF004555">
    <property type="entry name" value="UCP004555"/>
    <property type="match status" value="1"/>
</dbReference>
<dbReference type="SUPFAM" id="SSF82607">
    <property type="entry name" value="YbaB-like"/>
    <property type="match status" value="1"/>
</dbReference>
<reference key="1">
    <citation type="journal article" date="2007" name="Microbiology">
        <title>Comparative analysis of the Corynebacterium glutamicum group and complete genome sequence of strain R.</title>
        <authorList>
            <person name="Yukawa H."/>
            <person name="Omumasaba C.A."/>
            <person name="Nonaka H."/>
            <person name="Kos P."/>
            <person name="Okai N."/>
            <person name="Suzuki N."/>
            <person name="Suda M."/>
            <person name="Tsuge Y."/>
            <person name="Watanabe J."/>
            <person name="Ikeda Y."/>
            <person name="Vertes A.A."/>
            <person name="Inui M."/>
        </authorList>
    </citation>
    <scope>NUCLEOTIDE SEQUENCE [LARGE SCALE GENOMIC DNA]</scope>
    <source>
        <strain>R</strain>
    </source>
</reference>
<name>Y315_CORGB</name>
<keyword id="KW-0963">Cytoplasm</keyword>
<keyword id="KW-0238">DNA-binding</keyword>